<comment type="function">
    <text evidence="1">Seems to be required for the assembly of the photosystem I complex.</text>
</comment>
<comment type="subcellular location">
    <subcellularLocation>
        <location evidence="1">Plastid</location>
        <location evidence="1">Chloroplast thylakoid membrane</location>
        <topology evidence="1">Multi-pass membrane protein</topology>
    </subcellularLocation>
</comment>
<comment type="similarity">
    <text evidence="1">Belongs to the Ycf4 family.</text>
</comment>
<name>YCF4_CRUWA</name>
<sequence length="184" mass="21407">MSWRSESIWIEFITGSRKTSNFCWAFILFLGSLGFLLVGTSSYLGRNVISLFPSQQIIFFPQGIVMSFYGIAGLFISCYLWCTILWNVGSGYDLFDRKEGIVRIFRWGFPGKSRRIFLRFFMKDIQSIRIEVKEGVSARRVLYMEIRGQGAIPLIRTDENFTTREIEQKAAELAYFLRVPIEVF</sequence>
<proteinExistence type="inferred from homology"/>
<dbReference type="EMBL" id="AP009372">
    <property type="protein sequence ID" value="BAF50297.1"/>
    <property type="molecule type" value="Genomic_DNA"/>
</dbReference>
<dbReference type="RefSeq" id="YP_001123473.1">
    <property type="nucleotide sequence ID" value="NC_009271.1"/>
</dbReference>
<dbReference type="GeneID" id="4962661"/>
<dbReference type="GO" id="GO:0009535">
    <property type="term" value="C:chloroplast thylakoid membrane"/>
    <property type="evidence" value="ECO:0007669"/>
    <property type="project" value="UniProtKB-SubCell"/>
</dbReference>
<dbReference type="GO" id="GO:0009522">
    <property type="term" value="C:photosystem I"/>
    <property type="evidence" value="ECO:0007669"/>
    <property type="project" value="InterPro"/>
</dbReference>
<dbReference type="GO" id="GO:0015979">
    <property type="term" value="P:photosynthesis"/>
    <property type="evidence" value="ECO:0007669"/>
    <property type="project" value="UniProtKB-UniRule"/>
</dbReference>
<dbReference type="HAMAP" id="MF_00437">
    <property type="entry name" value="Ycf4"/>
    <property type="match status" value="1"/>
</dbReference>
<dbReference type="InterPro" id="IPR003359">
    <property type="entry name" value="PSI_Ycf4_assembly"/>
</dbReference>
<dbReference type="PANTHER" id="PTHR33288">
    <property type="match status" value="1"/>
</dbReference>
<dbReference type="PANTHER" id="PTHR33288:SF4">
    <property type="entry name" value="PHOTOSYSTEM I ASSEMBLY PROTEIN YCF4"/>
    <property type="match status" value="1"/>
</dbReference>
<dbReference type="Pfam" id="PF02392">
    <property type="entry name" value="Ycf4"/>
    <property type="match status" value="1"/>
</dbReference>
<reference key="1">
    <citation type="submission" date="2007-03" db="EMBL/GenBank/DDBJ databases">
        <title>Sequencing analysis of Crucihimalaya wallichii chloroplast DNA.</title>
        <authorList>
            <person name="Hosouchi T."/>
            <person name="Tsuruoka H."/>
            <person name="Kotani H."/>
        </authorList>
    </citation>
    <scope>NUCLEOTIDE SEQUENCE [LARGE SCALE GENOMIC DNA]</scope>
</reference>
<feature type="chain" id="PRO_0000326002" description="Photosystem I assembly protein Ycf4">
    <location>
        <begin position="1"/>
        <end position="184"/>
    </location>
</feature>
<feature type="transmembrane region" description="Helical" evidence="1">
    <location>
        <begin position="22"/>
        <end position="42"/>
    </location>
</feature>
<feature type="transmembrane region" description="Helical" evidence="1">
    <location>
        <begin position="57"/>
        <end position="77"/>
    </location>
</feature>
<evidence type="ECO:0000255" key="1">
    <source>
        <dbReference type="HAMAP-Rule" id="MF_00437"/>
    </source>
</evidence>
<geneLocation type="chloroplast"/>
<gene>
    <name evidence="1" type="primary">ycf4</name>
</gene>
<accession>A4QKU2</accession>
<organism>
    <name type="scientific">Crucihimalaya wallichii</name>
    <name type="common">Rock-cress</name>
    <name type="synonym">Arabidopsis campestris</name>
    <dbReference type="NCBI Taxonomy" id="78192"/>
    <lineage>
        <taxon>Eukaryota</taxon>
        <taxon>Viridiplantae</taxon>
        <taxon>Streptophyta</taxon>
        <taxon>Embryophyta</taxon>
        <taxon>Tracheophyta</taxon>
        <taxon>Spermatophyta</taxon>
        <taxon>Magnoliopsida</taxon>
        <taxon>eudicotyledons</taxon>
        <taxon>Gunneridae</taxon>
        <taxon>Pentapetalae</taxon>
        <taxon>rosids</taxon>
        <taxon>malvids</taxon>
        <taxon>Brassicales</taxon>
        <taxon>Brassicaceae</taxon>
        <taxon>Crucihimalayeae</taxon>
        <taxon>Crucihimalaya</taxon>
    </lineage>
</organism>
<keyword id="KW-0150">Chloroplast</keyword>
<keyword id="KW-0472">Membrane</keyword>
<keyword id="KW-0602">Photosynthesis</keyword>
<keyword id="KW-0934">Plastid</keyword>
<keyword id="KW-0793">Thylakoid</keyword>
<keyword id="KW-0812">Transmembrane</keyword>
<keyword id="KW-1133">Transmembrane helix</keyword>
<protein>
    <recommendedName>
        <fullName evidence="1">Photosystem I assembly protein Ycf4</fullName>
    </recommendedName>
</protein>